<comment type="function">
    <text evidence="1">NDH-1 shuttles electrons from NADH, via FMN and iron-sulfur (Fe-S) centers, to quinones in the respiratory chain. The immediate electron acceptor for the enzyme in this species is believed to be a menaquinone. Couples the redox reaction to proton translocation (for every two electrons transferred, four hydrogen ions are translocated across the cytoplasmic membrane), and thus conserves the redox energy in a proton gradient.</text>
</comment>
<comment type="catalytic activity">
    <reaction evidence="1">
        <text>a quinone + NADH + 5 H(+)(in) = a quinol + NAD(+) + 4 H(+)(out)</text>
        <dbReference type="Rhea" id="RHEA:57888"/>
        <dbReference type="ChEBI" id="CHEBI:15378"/>
        <dbReference type="ChEBI" id="CHEBI:24646"/>
        <dbReference type="ChEBI" id="CHEBI:57540"/>
        <dbReference type="ChEBI" id="CHEBI:57945"/>
        <dbReference type="ChEBI" id="CHEBI:132124"/>
    </reaction>
</comment>
<comment type="subunit">
    <text evidence="1">NDH-1 is composed of 14 different subunits. Subunits NuoA, H, J, K, L, M, N constitute the membrane sector of the complex.</text>
</comment>
<comment type="subcellular location">
    <subcellularLocation>
        <location evidence="1">Cell membrane</location>
        <topology evidence="1">Multi-pass membrane protein</topology>
    </subcellularLocation>
</comment>
<comment type="similarity">
    <text evidence="1">Belongs to the complex I subunit 4L family.</text>
</comment>
<name>NUOK_SALAI</name>
<reference key="1">
    <citation type="submission" date="2007-10" db="EMBL/GenBank/DDBJ databases">
        <title>Complete sequence of Salinispora arenicola CNS-205.</title>
        <authorList>
            <consortium name="US DOE Joint Genome Institute"/>
            <person name="Copeland A."/>
            <person name="Lucas S."/>
            <person name="Lapidus A."/>
            <person name="Barry K."/>
            <person name="Glavina del Rio T."/>
            <person name="Dalin E."/>
            <person name="Tice H."/>
            <person name="Pitluck S."/>
            <person name="Foster B."/>
            <person name="Schmutz J."/>
            <person name="Larimer F."/>
            <person name="Land M."/>
            <person name="Hauser L."/>
            <person name="Kyrpides N."/>
            <person name="Ivanova N."/>
            <person name="Jensen P.R."/>
            <person name="Moore B.S."/>
            <person name="Penn K."/>
            <person name="Jenkins C."/>
            <person name="Udwary D."/>
            <person name="Xiang L."/>
            <person name="Gontang E."/>
            <person name="Richardson P."/>
        </authorList>
    </citation>
    <scope>NUCLEOTIDE SEQUENCE [LARGE SCALE GENOMIC DNA]</scope>
    <source>
        <strain>CNS-205</strain>
    </source>
</reference>
<accession>A8M612</accession>
<protein>
    <recommendedName>
        <fullName evidence="1">NADH-quinone oxidoreductase subunit K</fullName>
        <ecNumber evidence="1">7.1.1.-</ecNumber>
    </recommendedName>
    <alternativeName>
        <fullName evidence="1">NADH dehydrogenase I subunit K</fullName>
    </alternativeName>
    <alternativeName>
        <fullName evidence="1">NDH-1 subunit K</fullName>
    </alternativeName>
</protein>
<organism>
    <name type="scientific">Salinispora arenicola (strain CNS-205)</name>
    <dbReference type="NCBI Taxonomy" id="391037"/>
    <lineage>
        <taxon>Bacteria</taxon>
        <taxon>Bacillati</taxon>
        <taxon>Actinomycetota</taxon>
        <taxon>Actinomycetes</taxon>
        <taxon>Micromonosporales</taxon>
        <taxon>Micromonosporaceae</taxon>
        <taxon>Salinispora</taxon>
    </lineage>
</organism>
<sequence>MNDFFSVEPNYYLVLAAVLFTIGAAGVLVRRNAIVLFMCVELMLNAANLTLVTFSRINGDLNGQIIAFFVMVVAAAEVVVGLAIIMAIFRTRRSASVDDANLLKY</sequence>
<proteinExistence type="inferred from homology"/>
<dbReference type="EC" id="7.1.1.-" evidence="1"/>
<dbReference type="EMBL" id="CP000850">
    <property type="protein sequence ID" value="ABW00228.1"/>
    <property type="molecule type" value="Genomic_DNA"/>
</dbReference>
<dbReference type="SMR" id="A8M612"/>
<dbReference type="STRING" id="391037.Sare_4453"/>
<dbReference type="KEGG" id="saq:Sare_4453"/>
<dbReference type="PATRIC" id="fig|391037.6.peg.4497"/>
<dbReference type="eggNOG" id="COG0713">
    <property type="taxonomic scope" value="Bacteria"/>
</dbReference>
<dbReference type="HOGENOM" id="CLU_144724_0_0_11"/>
<dbReference type="OrthoDB" id="9810120at2"/>
<dbReference type="GO" id="GO:0030964">
    <property type="term" value="C:NADH dehydrogenase complex"/>
    <property type="evidence" value="ECO:0007669"/>
    <property type="project" value="TreeGrafter"/>
</dbReference>
<dbReference type="GO" id="GO:0005886">
    <property type="term" value="C:plasma membrane"/>
    <property type="evidence" value="ECO:0007669"/>
    <property type="project" value="UniProtKB-SubCell"/>
</dbReference>
<dbReference type="GO" id="GO:0050136">
    <property type="term" value="F:NADH:ubiquinone reductase (non-electrogenic) activity"/>
    <property type="evidence" value="ECO:0007669"/>
    <property type="project" value="UniProtKB-UniRule"/>
</dbReference>
<dbReference type="GO" id="GO:0048038">
    <property type="term" value="F:quinone binding"/>
    <property type="evidence" value="ECO:0007669"/>
    <property type="project" value="UniProtKB-KW"/>
</dbReference>
<dbReference type="GO" id="GO:0042773">
    <property type="term" value="P:ATP synthesis coupled electron transport"/>
    <property type="evidence" value="ECO:0007669"/>
    <property type="project" value="InterPro"/>
</dbReference>
<dbReference type="FunFam" id="1.10.287.3510:FF:000001">
    <property type="entry name" value="NADH-quinone oxidoreductase subunit K"/>
    <property type="match status" value="1"/>
</dbReference>
<dbReference type="Gene3D" id="1.10.287.3510">
    <property type="match status" value="1"/>
</dbReference>
<dbReference type="HAMAP" id="MF_01456">
    <property type="entry name" value="NDH1_NuoK"/>
    <property type="match status" value="1"/>
</dbReference>
<dbReference type="InterPro" id="IPR001133">
    <property type="entry name" value="NADH_UbQ_OxRdtase_chain4L/K"/>
</dbReference>
<dbReference type="InterPro" id="IPR039428">
    <property type="entry name" value="NUOK/Mnh_C1-like"/>
</dbReference>
<dbReference type="NCBIfam" id="NF004320">
    <property type="entry name" value="PRK05715.1-2"/>
    <property type="match status" value="1"/>
</dbReference>
<dbReference type="NCBIfam" id="NF004321">
    <property type="entry name" value="PRK05715.1-3"/>
    <property type="match status" value="1"/>
</dbReference>
<dbReference type="NCBIfam" id="NF004323">
    <property type="entry name" value="PRK05715.1-5"/>
    <property type="match status" value="1"/>
</dbReference>
<dbReference type="PANTHER" id="PTHR11434:SF21">
    <property type="entry name" value="NADH DEHYDROGENASE SUBUNIT 4L-RELATED"/>
    <property type="match status" value="1"/>
</dbReference>
<dbReference type="PANTHER" id="PTHR11434">
    <property type="entry name" value="NADH-UBIQUINONE OXIDOREDUCTASE SUBUNIT ND4L"/>
    <property type="match status" value="1"/>
</dbReference>
<dbReference type="Pfam" id="PF00420">
    <property type="entry name" value="Oxidored_q2"/>
    <property type="match status" value="1"/>
</dbReference>
<keyword id="KW-1003">Cell membrane</keyword>
<keyword id="KW-0472">Membrane</keyword>
<keyword id="KW-0520">NAD</keyword>
<keyword id="KW-0874">Quinone</keyword>
<keyword id="KW-1278">Translocase</keyword>
<keyword id="KW-0812">Transmembrane</keyword>
<keyword id="KW-1133">Transmembrane helix</keyword>
<keyword id="KW-0813">Transport</keyword>
<evidence type="ECO:0000255" key="1">
    <source>
        <dbReference type="HAMAP-Rule" id="MF_01456"/>
    </source>
</evidence>
<gene>
    <name evidence="1" type="primary">nuoK</name>
    <name type="ordered locus">Sare_4453</name>
</gene>
<feature type="chain" id="PRO_0000390217" description="NADH-quinone oxidoreductase subunit K">
    <location>
        <begin position="1"/>
        <end position="105"/>
    </location>
</feature>
<feature type="transmembrane region" description="Helical" evidence="1">
    <location>
        <begin position="9"/>
        <end position="29"/>
    </location>
</feature>
<feature type="transmembrane region" description="Helical" evidence="1">
    <location>
        <begin position="34"/>
        <end position="54"/>
    </location>
</feature>
<feature type="transmembrane region" description="Helical" evidence="1">
    <location>
        <begin position="65"/>
        <end position="85"/>
    </location>
</feature>